<dbReference type="EC" id="6.3.4.2" evidence="1"/>
<dbReference type="EMBL" id="CP001050">
    <property type="protein sequence ID" value="ACF28995.1"/>
    <property type="molecule type" value="Genomic_DNA"/>
</dbReference>
<dbReference type="RefSeq" id="WP_003689652.1">
    <property type="nucleotide sequence ID" value="NC_011035.1"/>
</dbReference>
<dbReference type="SMR" id="B4RJ40"/>
<dbReference type="MEROPS" id="C26.964"/>
<dbReference type="KEGG" id="ngk:NGK_0301"/>
<dbReference type="HOGENOM" id="CLU_011675_5_0_4"/>
<dbReference type="UniPathway" id="UPA00159">
    <property type="reaction ID" value="UER00277"/>
</dbReference>
<dbReference type="Proteomes" id="UP000002564">
    <property type="component" value="Chromosome"/>
</dbReference>
<dbReference type="GO" id="GO:0005829">
    <property type="term" value="C:cytosol"/>
    <property type="evidence" value="ECO:0007669"/>
    <property type="project" value="TreeGrafter"/>
</dbReference>
<dbReference type="GO" id="GO:0005524">
    <property type="term" value="F:ATP binding"/>
    <property type="evidence" value="ECO:0007669"/>
    <property type="project" value="UniProtKB-KW"/>
</dbReference>
<dbReference type="GO" id="GO:0003883">
    <property type="term" value="F:CTP synthase activity"/>
    <property type="evidence" value="ECO:0007669"/>
    <property type="project" value="UniProtKB-UniRule"/>
</dbReference>
<dbReference type="GO" id="GO:0004359">
    <property type="term" value="F:glutaminase activity"/>
    <property type="evidence" value="ECO:0007669"/>
    <property type="project" value="RHEA"/>
</dbReference>
<dbReference type="GO" id="GO:0042802">
    <property type="term" value="F:identical protein binding"/>
    <property type="evidence" value="ECO:0007669"/>
    <property type="project" value="TreeGrafter"/>
</dbReference>
<dbReference type="GO" id="GO:0046872">
    <property type="term" value="F:metal ion binding"/>
    <property type="evidence" value="ECO:0007669"/>
    <property type="project" value="UniProtKB-KW"/>
</dbReference>
<dbReference type="GO" id="GO:0044210">
    <property type="term" value="P:'de novo' CTP biosynthetic process"/>
    <property type="evidence" value="ECO:0007669"/>
    <property type="project" value="UniProtKB-UniRule"/>
</dbReference>
<dbReference type="GO" id="GO:0019856">
    <property type="term" value="P:pyrimidine nucleobase biosynthetic process"/>
    <property type="evidence" value="ECO:0007669"/>
    <property type="project" value="TreeGrafter"/>
</dbReference>
<dbReference type="CDD" id="cd03113">
    <property type="entry name" value="CTPS_N"/>
    <property type="match status" value="1"/>
</dbReference>
<dbReference type="CDD" id="cd01746">
    <property type="entry name" value="GATase1_CTP_Synthase"/>
    <property type="match status" value="1"/>
</dbReference>
<dbReference type="FunFam" id="3.40.50.300:FF:000009">
    <property type="entry name" value="CTP synthase"/>
    <property type="match status" value="1"/>
</dbReference>
<dbReference type="FunFam" id="3.40.50.880:FF:000002">
    <property type="entry name" value="CTP synthase"/>
    <property type="match status" value="1"/>
</dbReference>
<dbReference type="Gene3D" id="3.40.50.880">
    <property type="match status" value="1"/>
</dbReference>
<dbReference type="Gene3D" id="3.40.50.300">
    <property type="entry name" value="P-loop containing nucleotide triphosphate hydrolases"/>
    <property type="match status" value="1"/>
</dbReference>
<dbReference type="HAMAP" id="MF_01227">
    <property type="entry name" value="PyrG"/>
    <property type="match status" value="1"/>
</dbReference>
<dbReference type="InterPro" id="IPR029062">
    <property type="entry name" value="Class_I_gatase-like"/>
</dbReference>
<dbReference type="InterPro" id="IPR004468">
    <property type="entry name" value="CTP_synthase"/>
</dbReference>
<dbReference type="InterPro" id="IPR017456">
    <property type="entry name" value="CTP_synthase_N"/>
</dbReference>
<dbReference type="InterPro" id="IPR017926">
    <property type="entry name" value="GATASE"/>
</dbReference>
<dbReference type="InterPro" id="IPR033828">
    <property type="entry name" value="GATase1_CTP_Synthase"/>
</dbReference>
<dbReference type="InterPro" id="IPR027417">
    <property type="entry name" value="P-loop_NTPase"/>
</dbReference>
<dbReference type="NCBIfam" id="NF003792">
    <property type="entry name" value="PRK05380.1"/>
    <property type="match status" value="1"/>
</dbReference>
<dbReference type="NCBIfam" id="TIGR00337">
    <property type="entry name" value="PyrG"/>
    <property type="match status" value="1"/>
</dbReference>
<dbReference type="PANTHER" id="PTHR11550">
    <property type="entry name" value="CTP SYNTHASE"/>
    <property type="match status" value="1"/>
</dbReference>
<dbReference type="PANTHER" id="PTHR11550:SF0">
    <property type="entry name" value="CTP SYNTHASE-RELATED"/>
    <property type="match status" value="1"/>
</dbReference>
<dbReference type="Pfam" id="PF06418">
    <property type="entry name" value="CTP_synth_N"/>
    <property type="match status" value="1"/>
</dbReference>
<dbReference type="Pfam" id="PF00117">
    <property type="entry name" value="GATase"/>
    <property type="match status" value="1"/>
</dbReference>
<dbReference type="SUPFAM" id="SSF52317">
    <property type="entry name" value="Class I glutamine amidotransferase-like"/>
    <property type="match status" value="1"/>
</dbReference>
<dbReference type="SUPFAM" id="SSF52540">
    <property type="entry name" value="P-loop containing nucleoside triphosphate hydrolases"/>
    <property type="match status" value="1"/>
</dbReference>
<dbReference type="PROSITE" id="PS51273">
    <property type="entry name" value="GATASE_TYPE_1"/>
    <property type="match status" value="1"/>
</dbReference>
<keyword id="KW-0067">ATP-binding</keyword>
<keyword id="KW-0315">Glutamine amidotransferase</keyword>
<keyword id="KW-0436">Ligase</keyword>
<keyword id="KW-0460">Magnesium</keyword>
<keyword id="KW-0479">Metal-binding</keyword>
<keyword id="KW-0547">Nucleotide-binding</keyword>
<keyword id="KW-0665">Pyrimidine biosynthesis</keyword>
<proteinExistence type="inferred from homology"/>
<comment type="function">
    <text evidence="1">Catalyzes the ATP-dependent amination of UTP to CTP with either L-glutamine or ammonia as the source of nitrogen. Regulates intracellular CTP levels through interactions with the four ribonucleotide triphosphates.</text>
</comment>
<comment type="catalytic activity">
    <reaction evidence="1">
        <text>UTP + L-glutamine + ATP + H2O = CTP + L-glutamate + ADP + phosphate + 2 H(+)</text>
        <dbReference type="Rhea" id="RHEA:26426"/>
        <dbReference type="ChEBI" id="CHEBI:15377"/>
        <dbReference type="ChEBI" id="CHEBI:15378"/>
        <dbReference type="ChEBI" id="CHEBI:29985"/>
        <dbReference type="ChEBI" id="CHEBI:30616"/>
        <dbReference type="ChEBI" id="CHEBI:37563"/>
        <dbReference type="ChEBI" id="CHEBI:43474"/>
        <dbReference type="ChEBI" id="CHEBI:46398"/>
        <dbReference type="ChEBI" id="CHEBI:58359"/>
        <dbReference type="ChEBI" id="CHEBI:456216"/>
        <dbReference type="EC" id="6.3.4.2"/>
    </reaction>
</comment>
<comment type="catalytic activity">
    <reaction evidence="1">
        <text>L-glutamine + H2O = L-glutamate + NH4(+)</text>
        <dbReference type="Rhea" id="RHEA:15889"/>
        <dbReference type="ChEBI" id="CHEBI:15377"/>
        <dbReference type="ChEBI" id="CHEBI:28938"/>
        <dbReference type="ChEBI" id="CHEBI:29985"/>
        <dbReference type="ChEBI" id="CHEBI:58359"/>
    </reaction>
</comment>
<comment type="catalytic activity">
    <reaction evidence="1">
        <text>UTP + NH4(+) + ATP = CTP + ADP + phosphate + 2 H(+)</text>
        <dbReference type="Rhea" id="RHEA:16597"/>
        <dbReference type="ChEBI" id="CHEBI:15378"/>
        <dbReference type="ChEBI" id="CHEBI:28938"/>
        <dbReference type="ChEBI" id="CHEBI:30616"/>
        <dbReference type="ChEBI" id="CHEBI:37563"/>
        <dbReference type="ChEBI" id="CHEBI:43474"/>
        <dbReference type="ChEBI" id="CHEBI:46398"/>
        <dbReference type="ChEBI" id="CHEBI:456216"/>
    </reaction>
</comment>
<comment type="activity regulation">
    <text evidence="1">Allosterically activated by GTP, when glutamine is the substrate; GTP has no effect on the reaction when ammonia is the substrate. The allosteric effector GTP functions by stabilizing the protein conformation that binds the tetrahedral intermediate(s) formed during glutamine hydrolysis. Inhibited by the product CTP, via allosteric rather than competitive inhibition.</text>
</comment>
<comment type="pathway">
    <text evidence="1">Pyrimidine metabolism; CTP biosynthesis via de novo pathway; CTP from UDP: step 2/2.</text>
</comment>
<comment type="subunit">
    <text evidence="1">Homotetramer.</text>
</comment>
<comment type="miscellaneous">
    <text evidence="1">CTPSs have evolved a hybrid strategy for distinguishing between UTP and CTP. The overlapping regions of the product feedback inhibitory and substrate sites recognize a common feature in both compounds, the triphosphate moiety. To differentiate isosteric substrate and product pyrimidine rings, an additional pocket far from the expected kinase/ligase catalytic site, specifically recognizes the cytosine and ribose portions of the product inhibitor.</text>
</comment>
<comment type="similarity">
    <text evidence="1">Belongs to the CTP synthase family.</text>
</comment>
<gene>
    <name evidence="1" type="primary">pyrG</name>
    <name type="ordered locus">NGK_0301</name>
</gene>
<feature type="chain" id="PRO_1000139503" description="CTP synthase">
    <location>
        <begin position="1"/>
        <end position="544"/>
    </location>
</feature>
<feature type="domain" description="Glutamine amidotransferase type-1" evidence="1">
    <location>
        <begin position="290"/>
        <end position="544"/>
    </location>
</feature>
<feature type="region of interest" description="Amidoligase domain" evidence="1">
    <location>
        <begin position="1"/>
        <end position="265"/>
    </location>
</feature>
<feature type="active site" description="Nucleophile; for glutamine hydrolysis" evidence="1">
    <location>
        <position position="380"/>
    </location>
</feature>
<feature type="active site" evidence="1">
    <location>
        <position position="517"/>
    </location>
</feature>
<feature type="active site" evidence="1">
    <location>
        <position position="519"/>
    </location>
</feature>
<feature type="binding site" evidence="1">
    <location>
        <position position="13"/>
    </location>
    <ligand>
        <name>CTP</name>
        <dbReference type="ChEBI" id="CHEBI:37563"/>
        <note>allosteric inhibitor</note>
    </ligand>
</feature>
<feature type="binding site" evidence="1">
    <location>
        <position position="13"/>
    </location>
    <ligand>
        <name>UTP</name>
        <dbReference type="ChEBI" id="CHEBI:46398"/>
    </ligand>
</feature>
<feature type="binding site" evidence="1">
    <location>
        <begin position="14"/>
        <end position="19"/>
    </location>
    <ligand>
        <name>ATP</name>
        <dbReference type="ChEBI" id="CHEBI:30616"/>
    </ligand>
</feature>
<feature type="binding site" evidence="1">
    <location>
        <position position="71"/>
    </location>
    <ligand>
        <name>ATP</name>
        <dbReference type="ChEBI" id="CHEBI:30616"/>
    </ligand>
</feature>
<feature type="binding site" evidence="1">
    <location>
        <position position="71"/>
    </location>
    <ligand>
        <name>Mg(2+)</name>
        <dbReference type="ChEBI" id="CHEBI:18420"/>
    </ligand>
</feature>
<feature type="binding site" evidence="1">
    <location>
        <position position="139"/>
    </location>
    <ligand>
        <name>Mg(2+)</name>
        <dbReference type="ChEBI" id="CHEBI:18420"/>
    </ligand>
</feature>
<feature type="binding site" evidence="1">
    <location>
        <begin position="146"/>
        <end position="148"/>
    </location>
    <ligand>
        <name>CTP</name>
        <dbReference type="ChEBI" id="CHEBI:37563"/>
        <note>allosteric inhibitor</note>
    </ligand>
</feature>
<feature type="binding site" evidence="1">
    <location>
        <begin position="186"/>
        <end position="191"/>
    </location>
    <ligand>
        <name>CTP</name>
        <dbReference type="ChEBI" id="CHEBI:37563"/>
        <note>allosteric inhibitor</note>
    </ligand>
</feature>
<feature type="binding site" evidence="1">
    <location>
        <begin position="186"/>
        <end position="191"/>
    </location>
    <ligand>
        <name>UTP</name>
        <dbReference type="ChEBI" id="CHEBI:46398"/>
    </ligand>
</feature>
<feature type="binding site" evidence="1">
    <location>
        <position position="222"/>
    </location>
    <ligand>
        <name>CTP</name>
        <dbReference type="ChEBI" id="CHEBI:37563"/>
        <note>allosteric inhibitor</note>
    </ligand>
</feature>
<feature type="binding site" evidence="1">
    <location>
        <position position="222"/>
    </location>
    <ligand>
        <name>UTP</name>
        <dbReference type="ChEBI" id="CHEBI:46398"/>
    </ligand>
</feature>
<feature type="binding site" evidence="1">
    <location>
        <position position="353"/>
    </location>
    <ligand>
        <name>L-glutamine</name>
        <dbReference type="ChEBI" id="CHEBI:58359"/>
    </ligand>
</feature>
<feature type="binding site" evidence="1">
    <location>
        <begin position="381"/>
        <end position="384"/>
    </location>
    <ligand>
        <name>L-glutamine</name>
        <dbReference type="ChEBI" id="CHEBI:58359"/>
    </ligand>
</feature>
<feature type="binding site" evidence="1">
    <location>
        <position position="404"/>
    </location>
    <ligand>
        <name>L-glutamine</name>
        <dbReference type="ChEBI" id="CHEBI:58359"/>
    </ligand>
</feature>
<feature type="binding site" evidence="1">
    <location>
        <position position="471"/>
    </location>
    <ligand>
        <name>L-glutamine</name>
        <dbReference type="ChEBI" id="CHEBI:58359"/>
    </ligand>
</feature>
<sequence>MTKFIFVTGGVVSSLGKGIAAASIAAILESRGLNVTMLKLDPYINVDPGTMSPFQHGEVFVTDDGAETDLDLGHYERFIDSTMTRRNSFSTGQVYENVIAKERRGDYLGGTVQVIPHITDEIKRRIHEGAAGYDVAIVEIGGTVGDIESLPFLEAIRQMRSQLGRNNTLFAHLSYVPYIAAAGEIKTKPTQHTVKEMLSIGLQPDILICRMDRKMPADERRKIALFCNVEERAIVGSYDVDSIYECPEMLHDQGIDNIITEQLQLNVQQADLTAWKKIVHAVKNPKHTVKIAMVGKYVDLTESYKSLIEALKHAGIHTETDVQITFVDSESIEKNKGDVSVLKDMDAILVPGGFGSRGVEGKIAAVRYARENNVPYLGICLGMQIALIEYARDVAGLKGANSTEFDLKCAAPVVALIDEWQTADGSVETRDESADLGGTMRLGAQEVELKAGSLAVKIYGSGHIRERHRHRYEVNNNYVSALEQAGLVIGGVSAGRERLVETIELPNHPWFFACQFHPEFTSNPRKGHPLFTAFVKAALNNKKA</sequence>
<evidence type="ECO:0000255" key="1">
    <source>
        <dbReference type="HAMAP-Rule" id="MF_01227"/>
    </source>
</evidence>
<reference key="1">
    <citation type="journal article" date="2008" name="J. Bacteriol.">
        <title>Complete genome sequence of Neisseria gonorrhoeae NCCP11945.</title>
        <authorList>
            <person name="Chung G.T."/>
            <person name="Yoo J.S."/>
            <person name="Oh H.B."/>
            <person name="Lee Y.S."/>
            <person name="Cha S.H."/>
            <person name="Kim S.J."/>
            <person name="Yoo C.K."/>
        </authorList>
    </citation>
    <scope>NUCLEOTIDE SEQUENCE [LARGE SCALE GENOMIC DNA]</scope>
    <source>
        <strain>NCCP11945</strain>
    </source>
</reference>
<name>PYRG_NEIG2</name>
<protein>
    <recommendedName>
        <fullName evidence="1">CTP synthase</fullName>
        <ecNumber evidence="1">6.3.4.2</ecNumber>
    </recommendedName>
    <alternativeName>
        <fullName evidence="1">Cytidine 5'-triphosphate synthase</fullName>
    </alternativeName>
    <alternativeName>
        <fullName evidence="1">Cytidine triphosphate synthetase</fullName>
        <shortName evidence="1">CTP synthetase</shortName>
        <shortName evidence="1">CTPS</shortName>
    </alternativeName>
    <alternativeName>
        <fullName evidence="1">UTP--ammonia ligase</fullName>
    </alternativeName>
</protein>
<organism>
    <name type="scientific">Neisseria gonorrhoeae (strain NCCP11945)</name>
    <dbReference type="NCBI Taxonomy" id="521006"/>
    <lineage>
        <taxon>Bacteria</taxon>
        <taxon>Pseudomonadati</taxon>
        <taxon>Pseudomonadota</taxon>
        <taxon>Betaproteobacteria</taxon>
        <taxon>Neisseriales</taxon>
        <taxon>Neisseriaceae</taxon>
        <taxon>Neisseria</taxon>
    </lineage>
</organism>
<accession>B4RJ40</accession>